<evidence type="ECO:0000255" key="1">
    <source>
        <dbReference type="HAMAP-Rule" id="MF_00049"/>
    </source>
</evidence>
<keyword id="KW-0030">Aminoacyl-tRNA synthetase</keyword>
<keyword id="KW-0067">ATP-binding</keyword>
<keyword id="KW-0963">Cytoplasm</keyword>
<keyword id="KW-0436">Ligase</keyword>
<keyword id="KW-0547">Nucleotide-binding</keyword>
<keyword id="KW-0648">Protein biosynthesis</keyword>
<keyword id="KW-1185">Reference proteome</keyword>
<gene>
    <name evidence="1" type="primary">leuS</name>
    <name type="ordered locus">Mfl490</name>
</gene>
<reference key="1">
    <citation type="submission" date="2004-06" db="EMBL/GenBank/DDBJ databases">
        <authorList>
            <person name="Birren B.W."/>
            <person name="Stange-Thomann N."/>
            <person name="Hafez N."/>
            <person name="DeCaprio D."/>
            <person name="Fisher S."/>
            <person name="Butler J."/>
            <person name="Elkins T."/>
            <person name="Kodira C.D."/>
            <person name="Major J."/>
            <person name="Wang S."/>
            <person name="Nicol R."/>
            <person name="Nusbaum C."/>
        </authorList>
    </citation>
    <scope>NUCLEOTIDE SEQUENCE [LARGE SCALE GENOMIC DNA]</scope>
    <source>
        <strain>ATCC 33453 / NBRC 100688 / NCTC 11704 / L1</strain>
    </source>
</reference>
<dbReference type="EC" id="6.1.1.4" evidence="1"/>
<dbReference type="EMBL" id="AE017263">
    <property type="protein sequence ID" value="AAT75848.1"/>
    <property type="molecule type" value="Genomic_DNA"/>
</dbReference>
<dbReference type="RefSeq" id="WP_011183388.1">
    <property type="nucleotide sequence ID" value="NC_006055.1"/>
</dbReference>
<dbReference type="RefSeq" id="YP_053732.1">
    <property type="nucleotide sequence ID" value="NC_006055.1"/>
</dbReference>
<dbReference type="SMR" id="Q6F0X5"/>
<dbReference type="STRING" id="265311.Mfl490"/>
<dbReference type="PaxDb" id="265311-Mfl490"/>
<dbReference type="EnsemblBacteria" id="AAT75848">
    <property type="protein sequence ID" value="AAT75848"/>
    <property type="gene ID" value="Mfl490"/>
</dbReference>
<dbReference type="GeneID" id="2898120"/>
<dbReference type="KEGG" id="mfl:Mfl490"/>
<dbReference type="PATRIC" id="fig|265311.5.peg.496"/>
<dbReference type="eggNOG" id="COG0495">
    <property type="taxonomic scope" value="Bacteria"/>
</dbReference>
<dbReference type="HOGENOM" id="CLU_004427_0_0_14"/>
<dbReference type="OrthoDB" id="9810365at2"/>
<dbReference type="Proteomes" id="UP000006647">
    <property type="component" value="Chromosome"/>
</dbReference>
<dbReference type="GO" id="GO:0005829">
    <property type="term" value="C:cytosol"/>
    <property type="evidence" value="ECO:0007669"/>
    <property type="project" value="TreeGrafter"/>
</dbReference>
<dbReference type="GO" id="GO:0002161">
    <property type="term" value="F:aminoacyl-tRNA deacylase activity"/>
    <property type="evidence" value="ECO:0007669"/>
    <property type="project" value="InterPro"/>
</dbReference>
<dbReference type="GO" id="GO:0005524">
    <property type="term" value="F:ATP binding"/>
    <property type="evidence" value="ECO:0007669"/>
    <property type="project" value="UniProtKB-UniRule"/>
</dbReference>
<dbReference type="GO" id="GO:0004823">
    <property type="term" value="F:leucine-tRNA ligase activity"/>
    <property type="evidence" value="ECO:0007669"/>
    <property type="project" value="UniProtKB-UniRule"/>
</dbReference>
<dbReference type="GO" id="GO:0006429">
    <property type="term" value="P:leucyl-tRNA aminoacylation"/>
    <property type="evidence" value="ECO:0007669"/>
    <property type="project" value="UniProtKB-UniRule"/>
</dbReference>
<dbReference type="CDD" id="cd07958">
    <property type="entry name" value="Anticodon_Ia_Leu_BEm"/>
    <property type="match status" value="1"/>
</dbReference>
<dbReference type="CDD" id="cd00812">
    <property type="entry name" value="LeuRS_core"/>
    <property type="match status" value="1"/>
</dbReference>
<dbReference type="FunFam" id="1.10.730.10:FF:000002">
    <property type="entry name" value="Leucine--tRNA ligase"/>
    <property type="match status" value="1"/>
</dbReference>
<dbReference type="FunFam" id="3.40.50.620:FF:000056">
    <property type="entry name" value="Leucine--tRNA ligase"/>
    <property type="match status" value="1"/>
</dbReference>
<dbReference type="FunFam" id="3.40.50.620:FF:000077">
    <property type="entry name" value="Leucine--tRNA ligase"/>
    <property type="match status" value="1"/>
</dbReference>
<dbReference type="Gene3D" id="3.10.20.590">
    <property type="match status" value="1"/>
</dbReference>
<dbReference type="Gene3D" id="3.40.50.620">
    <property type="entry name" value="HUPs"/>
    <property type="match status" value="2"/>
</dbReference>
<dbReference type="Gene3D" id="1.10.730.10">
    <property type="entry name" value="Isoleucyl-tRNA Synthetase, Domain 1"/>
    <property type="match status" value="1"/>
</dbReference>
<dbReference type="HAMAP" id="MF_00049_B">
    <property type="entry name" value="Leu_tRNA_synth_B"/>
    <property type="match status" value="1"/>
</dbReference>
<dbReference type="InterPro" id="IPR001412">
    <property type="entry name" value="aa-tRNA-synth_I_CS"/>
</dbReference>
<dbReference type="InterPro" id="IPR002300">
    <property type="entry name" value="aa-tRNA-synth_Ia"/>
</dbReference>
<dbReference type="InterPro" id="IPR002302">
    <property type="entry name" value="Leu-tRNA-ligase"/>
</dbReference>
<dbReference type="InterPro" id="IPR025709">
    <property type="entry name" value="Leu_tRNA-synth_edit"/>
</dbReference>
<dbReference type="InterPro" id="IPR013155">
    <property type="entry name" value="M/V/L/I-tRNA-synth_anticd-bd"/>
</dbReference>
<dbReference type="InterPro" id="IPR014729">
    <property type="entry name" value="Rossmann-like_a/b/a_fold"/>
</dbReference>
<dbReference type="InterPro" id="IPR009080">
    <property type="entry name" value="tRNAsynth_Ia_anticodon-bd"/>
</dbReference>
<dbReference type="InterPro" id="IPR009008">
    <property type="entry name" value="Val/Leu/Ile-tRNA-synth_edit"/>
</dbReference>
<dbReference type="NCBIfam" id="TIGR00396">
    <property type="entry name" value="leuS_bact"/>
    <property type="match status" value="1"/>
</dbReference>
<dbReference type="PANTHER" id="PTHR43740:SF2">
    <property type="entry name" value="LEUCINE--TRNA LIGASE, MITOCHONDRIAL"/>
    <property type="match status" value="1"/>
</dbReference>
<dbReference type="PANTHER" id="PTHR43740">
    <property type="entry name" value="LEUCYL-TRNA SYNTHETASE"/>
    <property type="match status" value="1"/>
</dbReference>
<dbReference type="Pfam" id="PF08264">
    <property type="entry name" value="Anticodon_1"/>
    <property type="match status" value="1"/>
</dbReference>
<dbReference type="Pfam" id="PF00133">
    <property type="entry name" value="tRNA-synt_1"/>
    <property type="match status" value="1"/>
</dbReference>
<dbReference type="Pfam" id="PF13603">
    <property type="entry name" value="tRNA-synt_1_2"/>
    <property type="match status" value="1"/>
</dbReference>
<dbReference type="PRINTS" id="PR00985">
    <property type="entry name" value="TRNASYNTHLEU"/>
</dbReference>
<dbReference type="SUPFAM" id="SSF47323">
    <property type="entry name" value="Anticodon-binding domain of a subclass of class I aminoacyl-tRNA synthetases"/>
    <property type="match status" value="1"/>
</dbReference>
<dbReference type="SUPFAM" id="SSF52374">
    <property type="entry name" value="Nucleotidylyl transferase"/>
    <property type="match status" value="1"/>
</dbReference>
<dbReference type="SUPFAM" id="SSF50677">
    <property type="entry name" value="ValRS/IleRS/LeuRS editing domain"/>
    <property type="match status" value="1"/>
</dbReference>
<dbReference type="PROSITE" id="PS00178">
    <property type="entry name" value="AA_TRNA_LIGASE_I"/>
    <property type="match status" value="1"/>
</dbReference>
<accession>Q6F0X5</accession>
<sequence>MEFSHKAIEKKWKKYWEENNTNKTTNTSDKKSYVLDMFPYPSGAGIHVGHVKGYTATDVFSRYKRMNGYDVLHPMGWDAFGLPAEQYALKTGNDPIDFTLENIKTFKRQLKMMGFSYDFDKEISTANPNYYKITQWIFNQLYKKGLAENRDVEVNWCQELGTVLANDEIIEKDGLMVSERGEHPVTKRKMRQWVLKITEYADRLLEGLDELEWNSSIKDLQRNWIGKSTGVELDFLVNNIKVPVFTTRIDTIYGVSYIVLAPEHEQVLNITTPEQLKEVQTYIELAKNKSEIDRKDESKPKTGVFTGSYATNPHTNELVQVWVSDYVLANYGTGAVMAVPAHDKRDWEFATKFNLEKKFVIENKTDEKAFVGEGKIINSDILNGMDKKQAIQTMTKIAIEQGWGREQTNYKLRDWLFSRQRFYGEPFPVLYGPNQEITLIEDLPVELPRIKNIKPSGTGESPLANVEEWVNVEIDGVKYRRETNTMPQSAGSSWYYLAYILADGENEFIDIDSAEAKKRFEKWMPVDLYVGGQEHAVGHLLYARFWNYVLYDLGITSVKEPFKQLFNQGMILGPDGRKMSKSWGNVINPDDIVSTHGADSLRLYEMFMGPLDASLPWSEDGLDSALKWIHRAYRMVMTTELTDVNDTKLDFVYNDVVKNVSEMIESLKFNTAISQLMIFVNAVYKHEGPVYRPYIEGFVKMLSIYAPFIGEELWEKLGHAPSITKQAWPVFDPSKLVSNTVVIALQINGKLRATIEVEKGTIKDKLLELAKKQESIISYIKDKEIIKEIAVVDRIVNIVIK</sequence>
<comment type="catalytic activity">
    <reaction evidence="1">
        <text>tRNA(Leu) + L-leucine + ATP = L-leucyl-tRNA(Leu) + AMP + diphosphate</text>
        <dbReference type="Rhea" id="RHEA:11688"/>
        <dbReference type="Rhea" id="RHEA-COMP:9613"/>
        <dbReference type="Rhea" id="RHEA-COMP:9622"/>
        <dbReference type="ChEBI" id="CHEBI:30616"/>
        <dbReference type="ChEBI" id="CHEBI:33019"/>
        <dbReference type="ChEBI" id="CHEBI:57427"/>
        <dbReference type="ChEBI" id="CHEBI:78442"/>
        <dbReference type="ChEBI" id="CHEBI:78494"/>
        <dbReference type="ChEBI" id="CHEBI:456215"/>
        <dbReference type="EC" id="6.1.1.4"/>
    </reaction>
</comment>
<comment type="subcellular location">
    <subcellularLocation>
        <location evidence="1">Cytoplasm</location>
    </subcellularLocation>
</comment>
<comment type="similarity">
    <text evidence="1">Belongs to the class-I aminoacyl-tRNA synthetase family.</text>
</comment>
<proteinExistence type="inferred from homology"/>
<organism>
    <name type="scientific">Mesoplasma florum (strain ATCC 33453 / NBRC 100688 / NCTC 11704 / L1)</name>
    <name type="common">Acholeplasma florum</name>
    <dbReference type="NCBI Taxonomy" id="265311"/>
    <lineage>
        <taxon>Bacteria</taxon>
        <taxon>Bacillati</taxon>
        <taxon>Mycoplasmatota</taxon>
        <taxon>Mollicutes</taxon>
        <taxon>Entomoplasmatales</taxon>
        <taxon>Entomoplasmataceae</taxon>
        <taxon>Mesoplasma</taxon>
    </lineage>
</organism>
<name>SYL_MESFL</name>
<feature type="chain" id="PRO_0000152041" description="Leucine--tRNA ligase">
    <location>
        <begin position="1"/>
        <end position="801"/>
    </location>
</feature>
<feature type="short sequence motif" description="'HIGH' region">
    <location>
        <begin position="39"/>
        <end position="50"/>
    </location>
</feature>
<feature type="short sequence motif" description="'KMSKS' region">
    <location>
        <begin position="578"/>
        <end position="582"/>
    </location>
</feature>
<feature type="binding site" evidence="1">
    <location>
        <position position="581"/>
    </location>
    <ligand>
        <name>ATP</name>
        <dbReference type="ChEBI" id="CHEBI:30616"/>
    </ligand>
</feature>
<protein>
    <recommendedName>
        <fullName evidence="1">Leucine--tRNA ligase</fullName>
        <ecNumber evidence="1">6.1.1.4</ecNumber>
    </recommendedName>
    <alternativeName>
        <fullName evidence="1">Leucyl-tRNA synthetase</fullName>
        <shortName evidence="1">LeuRS</shortName>
    </alternativeName>
</protein>